<keyword id="KW-1032">Host cell membrane</keyword>
<keyword id="KW-1038">Host endoplasmic reticulum</keyword>
<keyword id="KW-1040">Host Golgi apparatus</keyword>
<keyword id="KW-1043">Host membrane</keyword>
<keyword id="KW-0472">Membrane</keyword>
<keyword id="KW-0597">Phosphoprotein</keyword>
<keyword id="KW-1185">Reference proteome</keyword>
<keyword id="KW-0735">Signal-anchor</keyword>
<keyword id="KW-0812">Transmembrane</keyword>
<keyword id="KW-1133">Transmembrane helix</keyword>
<keyword id="KW-0261">Viral envelope protein</keyword>
<keyword id="KW-0946">Virion</keyword>
<reference key="1">
    <citation type="journal article" date="1992" name="Virology">
        <title>The DNA sequence of equine herpesvirus-1.</title>
        <authorList>
            <person name="Telford E.A.R."/>
            <person name="Watson M.S."/>
            <person name="McBride K."/>
            <person name="Davison A.J."/>
        </authorList>
    </citation>
    <scope>NUCLEOTIDE SEQUENCE [LARGE SCALE GENOMIC DNA]</scope>
</reference>
<comment type="function">
    <text evidence="1">Essential for the anterograde spread of the infection throughout the host nervous system. Together with the gE/gI heterodimer, US9 is involved in the sorting and transport of viral structural components toward axon tips (By similarity).</text>
</comment>
<comment type="subcellular location">
    <subcellularLocation>
        <location evidence="1">Virion membrane</location>
        <topology evidence="1">Single-pass type II membrane protein</topology>
    </subcellularLocation>
    <subcellularLocation>
        <location evidence="1">Host Golgi apparatus membrane</location>
        <topology evidence="1">Single-pass type II membrane protein</topology>
    </subcellularLocation>
    <subcellularLocation>
        <location evidence="1">Host smooth endoplasmic reticulum membrane</location>
        <topology evidence="1">Single-pass type II membrane protein</topology>
    </subcellularLocation>
    <subcellularLocation>
        <location evidence="3">Host cell membrane</location>
        <topology evidence="3">Single-pass type II membrane protein</topology>
    </subcellularLocation>
    <text>During virion morphogenesis, this protein probably accumulates in the endosomes and trans-Golgi where secondary envelopment occurs. It is probably transported to the cell surface from where it is endocytosed and directed to the trans-Golgi network (TGN), maybe through an interaction with PACS-1 sorting protein.</text>
</comment>
<comment type="PTM">
    <text evidence="3">Phosphorylated on serines within the acidic cluster. Phosphorylation determines whether endocytosed viral US9 traffics to the trans-Golgi network or recycles to the cell membrane.</text>
</comment>
<comment type="similarity">
    <text evidence="3">Belongs to the alphaherpesvirinae envelope protein US9 family.</text>
</comment>
<proteinExistence type="inferred from homology"/>
<name>US9_EHV1B</name>
<feature type="chain" id="PRO_0000116134" description="Envelope protein US9 homolog">
    <location>
        <begin position="1"/>
        <end position="219"/>
    </location>
</feature>
<feature type="topological domain" description="Intravirion" evidence="1">
    <location>
        <begin position="1"/>
        <end position="193"/>
    </location>
</feature>
<feature type="transmembrane region" description="Helical; Signal-anchor for type II membrane protein" evidence="1">
    <location>
        <begin position="194"/>
        <end position="214"/>
    </location>
</feature>
<feature type="topological domain" description="Virion surface" evidence="1">
    <location>
        <begin position="215"/>
        <end position="219"/>
    </location>
</feature>
<feature type="region of interest" description="Acidic">
    <location>
        <begin position="153"/>
        <end position="168"/>
    </location>
</feature>
<feature type="short sequence motif" description="Di-leucine internalization motif" evidence="2">
    <location>
        <begin position="145"/>
        <end position="146"/>
    </location>
</feature>
<feature type="modified residue" description="Phosphoserine; by host CK2" evidence="2">
    <location>
        <position position="163"/>
    </location>
</feature>
<feature type="modified residue" description="Phosphoserine; by host CK2" evidence="2">
    <location>
        <position position="165"/>
    </location>
</feature>
<gene>
    <name type="ordered locus">76</name>
</gene>
<protein>
    <recommendedName>
        <fullName>Envelope protein US9 homolog</fullName>
    </recommendedName>
    <alternativeName>
        <fullName>Envelope protein 76</fullName>
    </alternativeName>
    <alternativeName>
        <fullName>ORF76 protein</fullName>
    </alternativeName>
</protein>
<sequence>MEKAEAAAVVIPLSVSNPSYRGSGMSDQEVSEEQSAGDAWVSAAMAAAEAVAAAATSTGIDNTNDYTYTAASENGDPGFTLGDNTYGPNGAASGCPSPPSPEVVGLEMVVVSSLAPEIAAAVPADTIFASAAAPATRVDDGNAPLLGPGQAQDYDSESGCYYSESDNETASMFIRRVGRRQARRHRRRRVALTVAGVILVVVLCAISGIVGAFLARVFP</sequence>
<dbReference type="EMBL" id="AY665713">
    <property type="protein sequence ID" value="AAT67333.1"/>
    <property type="molecule type" value="Genomic_DNA"/>
</dbReference>
<dbReference type="PIR" id="D36803">
    <property type="entry name" value="TEBEG6"/>
</dbReference>
<dbReference type="SMR" id="P28930"/>
<dbReference type="KEGG" id="vg:2948578"/>
<dbReference type="Proteomes" id="UP000001189">
    <property type="component" value="Segment"/>
</dbReference>
<dbReference type="GO" id="GO:0043657">
    <property type="term" value="C:host cell"/>
    <property type="evidence" value="ECO:0007669"/>
    <property type="project" value="GOC"/>
</dbReference>
<dbReference type="GO" id="GO:0044178">
    <property type="term" value="C:host cell Golgi membrane"/>
    <property type="evidence" value="ECO:0007669"/>
    <property type="project" value="UniProtKB-SubCell"/>
</dbReference>
<dbReference type="GO" id="GO:0020002">
    <property type="term" value="C:host cell plasma membrane"/>
    <property type="evidence" value="ECO:0007669"/>
    <property type="project" value="UniProtKB-SubCell"/>
</dbReference>
<dbReference type="GO" id="GO:0044171">
    <property type="term" value="C:host cell smooth endoplasmic reticulum membrane"/>
    <property type="evidence" value="ECO:0007669"/>
    <property type="project" value="UniProtKB-SubCell"/>
</dbReference>
<dbReference type="GO" id="GO:0016020">
    <property type="term" value="C:membrane"/>
    <property type="evidence" value="ECO:0007669"/>
    <property type="project" value="UniProtKB-KW"/>
</dbReference>
<dbReference type="GO" id="GO:0019031">
    <property type="term" value="C:viral envelope"/>
    <property type="evidence" value="ECO:0007669"/>
    <property type="project" value="UniProtKB-KW"/>
</dbReference>
<dbReference type="GO" id="GO:0055036">
    <property type="term" value="C:virion membrane"/>
    <property type="evidence" value="ECO:0007669"/>
    <property type="project" value="UniProtKB-SubCell"/>
</dbReference>
<dbReference type="GO" id="GO:0075733">
    <property type="term" value="P:intracellular transport of virus"/>
    <property type="evidence" value="ECO:0007669"/>
    <property type="project" value="InterPro"/>
</dbReference>
<dbReference type="InterPro" id="IPR009278">
    <property type="entry name" value="Herpes_US9"/>
</dbReference>
<dbReference type="Pfam" id="PF06072">
    <property type="entry name" value="Herpes_US9"/>
    <property type="match status" value="1"/>
</dbReference>
<evidence type="ECO:0000250" key="1"/>
<evidence type="ECO:0000255" key="2"/>
<evidence type="ECO:0000305" key="3"/>
<accession>P28930</accession>
<accession>Q6DLD5</accession>
<organism>
    <name type="scientific">Equine herpesvirus 1 (strain Ab4p)</name>
    <name type="common">EHV-1</name>
    <name type="synonym">Equine abortion virus</name>
    <dbReference type="NCBI Taxonomy" id="31520"/>
    <lineage>
        <taxon>Viruses</taxon>
        <taxon>Duplodnaviria</taxon>
        <taxon>Heunggongvirae</taxon>
        <taxon>Peploviricota</taxon>
        <taxon>Herviviricetes</taxon>
        <taxon>Herpesvirales</taxon>
        <taxon>Orthoherpesviridae</taxon>
        <taxon>Alphaherpesvirinae</taxon>
        <taxon>Varicellovirus</taxon>
        <taxon>Varicellovirus equidalpha1</taxon>
        <taxon>Equid alphaherpesvirus 1</taxon>
    </lineage>
</organism>
<organismHost>
    <name type="scientific">Equus caballus</name>
    <name type="common">Horse</name>
    <dbReference type="NCBI Taxonomy" id="9796"/>
</organismHost>